<feature type="chain" id="PRO_0000333020" description="Gypsy retrotransposon integrase-like protein 1">
    <location>
        <begin position="1"/>
        <end position="518"/>
    </location>
</feature>
<feature type="domain" description="Integrase catalytic" evidence="2">
    <location>
        <begin position="135"/>
        <end position="293"/>
    </location>
</feature>
<feature type="region of interest" description="Disordered" evidence="3">
    <location>
        <begin position="326"/>
        <end position="348"/>
    </location>
</feature>
<feature type="modified residue" description="Phosphoserine" evidence="1">
    <location>
        <position position="498"/>
    </location>
</feature>
<organism>
    <name type="scientific">Rattus norvegicus</name>
    <name type="common">Rat</name>
    <dbReference type="NCBI Taxonomy" id="10116"/>
    <lineage>
        <taxon>Eukaryota</taxon>
        <taxon>Metazoa</taxon>
        <taxon>Chordata</taxon>
        <taxon>Craniata</taxon>
        <taxon>Vertebrata</taxon>
        <taxon>Euteleostomi</taxon>
        <taxon>Mammalia</taxon>
        <taxon>Eutheria</taxon>
        <taxon>Euarchontoglires</taxon>
        <taxon>Glires</taxon>
        <taxon>Rodentia</taxon>
        <taxon>Myomorpha</taxon>
        <taxon>Muroidea</taxon>
        <taxon>Muridae</taxon>
        <taxon>Murinae</taxon>
        <taxon>Rattus</taxon>
    </lineage>
</organism>
<name>GIN1_RAT</name>
<reference key="1">
    <citation type="journal article" date="2004" name="Genome Res.">
        <title>The status, quality, and expansion of the NIH full-length cDNA project: the Mammalian Gene Collection (MGC).</title>
        <authorList>
            <consortium name="The MGC Project Team"/>
        </authorList>
    </citation>
    <scope>NUCLEOTIDE SEQUENCE [LARGE SCALE MRNA]</scope>
    <source>
        <tissue>Testis</tissue>
    </source>
</reference>
<protein>
    <recommendedName>
        <fullName>Gypsy retrotransposon integrase-like protein 1</fullName>
        <shortName>GIN-1</shortName>
    </recommendedName>
</protein>
<gene>
    <name type="primary">GIN1</name>
</gene>
<accession>Q66H30</accession>
<sequence length="518" mass="58538">MVRSGKNGDLHLKQIAYYKRTGEYHPTTLSSERSGIRRAAKKFVFKEKKLFYVGKDRKQNRLVVVSEEEKKKVLRECHENGPGVHHGISRTLTLVESSYYWTSVTNDVKQWVYACQHCQVAKSTVIVAPQQHLSVVGNPWSVVTVDLMGPFHTSSRSHVYAMIMTDLFTKWVMILPLCDVSASEISKAIINIFFLYGPPQKIIMDQRDEFIDQINVELYRLFGAKEIVISQASGSVNPSESTPSTVKTFLSKHCAEHPETWDEELPALSFAFNVTRVEPTKNSPYFQMFNRNPCLLECPHEGGGEGTSVFARIVAAVREADGVVENQTPAAGQMESSTSEELSKSKVAKKKPKQLNPFHLKVGHEVLRQRKNWWKDGRFQSEWVGPCVIDYITDSGCAVLRDNTGTRLKRPIKMSHLRPYVREPSEQDSLYLLQGSIVADHDYIGLPEIPVGTYQANILVEDATIGIVDNELLISSKDHELLEYRNSKISALVEDHSSLEKQTFSLLDSSNQVLEYLS</sequence>
<proteinExistence type="evidence at transcript level"/>
<evidence type="ECO:0000250" key="1">
    <source>
        <dbReference type="UniProtKB" id="Q9NXP7"/>
    </source>
</evidence>
<evidence type="ECO:0000255" key="2">
    <source>
        <dbReference type="PROSITE-ProRule" id="PRU00457"/>
    </source>
</evidence>
<evidence type="ECO:0000256" key="3">
    <source>
        <dbReference type="SAM" id="MobiDB-lite"/>
    </source>
</evidence>
<keyword id="KW-0597">Phosphoprotein</keyword>
<keyword id="KW-1185">Reference proteome</keyword>
<dbReference type="EMBL" id="BC082058">
    <property type="protein sequence ID" value="AAH82058.1"/>
    <property type="molecule type" value="mRNA"/>
</dbReference>
<dbReference type="RefSeq" id="NP_001020183.1">
    <property type="nucleotide sequence ID" value="NM_001025012.1"/>
</dbReference>
<dbReference type="RefSeq" id="XP_006245666.1">
    <property type="nucleotide sequence ID" value="XM_006245604.2"/>
</dbReference>
<dbReference type="RefSeq" id="XP_006245667.1">
    <property type="nucleotide sequence ID" value="XM_006245605.3"/>
</dbReference>
<dbReference type="SMR" id="Q66H30"/>
<dbReference type="FunCoup" id="Q66H30">
    <property type="interactions" value="1472"/>
</dbReference>
<dbReference type="STRING" id="10116.ENSRNOP00000016028"/>
<dbReference type="GlyGen" id="Q66H30">
    <property type="glycosylation" value="1 site"/>
</dbReference>
<dbReference type="PhosphoSitePlus" id="Q66H30"/>
<dbReference type="PaxDb" id="10116-ENSRNOP00000016028"/>
<dbReference type="Ensembl" id="ENSRNOT00000016028.8">
    <property type="protein sequence ID" value="ENSRNOP00000016028.6"/>
    <property type="gene ID" value="ENSRNOG00000011962.9"/>
</dbReference>
<dbReference type="GeneID" id="316687"/>
<dbReference type="KEGG" id="rno:316687"/>
<dbReference type="UCSC" id="RGD:1307449">
    <property type="organism name" value="rat"/>
</dbReference>
<dbReference type="AGR" id="RGD:1307449"/>
<dbReference type="CTD" id="54826"/>
<dbReference type="RGD" id="1307449">
    <property type="gene designation" value="Gin1"/>
</dbReference>
<dbReference type="eggNOG" id="KOG0017">
    <property type="taxonomic scope" value="Eukaryota"/>
</dbReference>
<dbReference type="GeneTree" id="ENSGT00940000160670"/>
<dbReference type="InParanoid" id="Q66H30"/>
<dbReference type="OMA" id="YPNNWDD"/>
<dbReference type="OrthoDB" id="413122at2759"/>
<dbReference type="PhylomeDB" id="Q66H30"/>
<dbReference type="PRO" id="PR:Q66H30"/>
<dbReference type="Proteomes" id="UP000002494">
    <property type="component" value="Chromosome 9"/>
</dbReference>
<dbReference type="Bgee" id="ENSRNOG00000011962">
    <property type="expression patterns" value="Expressed in thymus and 19 other cell types or tissues"/>
</dbReference>
<dbReference type="GO" id="GO:0003676">
    <property type="term" value="F:nucleic acid binding"/>
    <property type="evidence" value="ECO:0007669"/>
    <property type="project" value="InterPro"/>
</dbReference>
<dbReference type="GO" id="GO:0015074">
    <property type="term" value="P:DNA integration"/>
    <property type="evidence" value="ECO:0007669"/>
    <property type="project" value="InterPro"/>
</dbReference>
<dbReference type="FunFam" id="1.10.340.70:FF:000001">
    <property type="entry name" value="Retrovirus-related Pol polyprotein from transposon gypsy-like Protein"/>
    <property type="match status" value="1"/>
</dbReference>
<dbReference type="Gene3D" id="1.10.340.70">
    <property type="match status" value="1"/>
</dbReference>
<dbReference type="Gene3D" id="3.30.420.10">
    <property type="entry name" value="Ribonuclease H-like superfamily/Ribonuclease H"/>
    <property type="match status" value="1"/>
</dbReference>
<dbReference type="InterPro" id="IPR001584">
    <property type="entry name" value="Integrase_cat-core"/>
</dbReference>
<dbReference type="InterPro" id="IPR041588">
    <property type="entry name" value="Integrase_H2C2"/>
</dbReference>
<dbReference type="InterPro" id="IPR050951">
    <property type="entry name" value="Retrovirus_Pol_polyprotein"/>
</dbReference>
<dbReference type="InterPro" id="IPR012337">
    <property type="entry name" value="RNaseH-like_sf"/>
</dbReference>
<dbReference type="InterPro" id="IPR036397">
    <property type="entry name" value="RNaseH_sf"/>
</dbReference>
<dbReference type="PANTHER" id="PTHR37984">
    <property type="entry name" value="PROTEIN CBG26694"/>
    <property type="match status" value="1"/>
</dbReference>
<dbReference type="PANTHER" id="PTHR37984:SF5">
    <property type="entry name" value="PROTEIN NYNRIN-LIKE"/>
    <property type="match status" value="1"/>
</dbReference>
<dbReference type="Pfam" id="PF17921">
    <property type="entry name" value="Integrase_H2C2"/>
    <property type="match status" value="1"/>
</dbReference>
<dbReference type="SUPFAM" id="SSF53098">
    <property type="entry name" value="Ribonuclease H-like"/>
    <property type="match status" value="1"/>
</dbReference>
<dbReference type="PROSITE" id="PS50994">
    <property type="entry name" value="INTEGRASE"/>
    <property type="match status" value="1"/>
</dbReference>